<sequence>MGEQPIFTTRAHVFQIDPNTKKNWMPASKQAVTVSYFYDVTRNSYRIISVDGAKVIINSTITPNMTFTKTSQKFGQWADSRANTVFGLGFSSEQQLTKFAEKFQEVKEAAKIAKDKTQEKIETSSNHSQESGRETPSSTQASSVNGTDDEKASHAGPANTHLKSENDKLKIALTQSAANVKKWEIELQTLRESNARLTTALQESAASVEQWKRQFSICRDENDRLRNKIDELEEQCSEINREKEKNTQLKRRIEELEAELREKETELKDLRKQSEIIPQLMSECEYVSEKLEAAERDNQNLEDKVRSLKTDIEESKYRQRHLKVELKSFLEVLDGKIDDLHDFRRGLSKLGTDN</sequence>
<reference key="1">
    <citation type="journal article" date="1998" name="Neuron">
        <title>Homer regulates the association of group 1 metabotropic glutamate receptors with multivalent complexes of homer-related, synaptic proteins.</title>
        <authorList>
            <person name="Xiao B."/>
            <person name="Tu J.C."/>
            <person name="Petralia R.S."/>
            <person name="Yuan J.P."/>
            <person name="Doan A."/>
            <person name="Breder C.D."/>
            <person name="Ruggiero A."/>
            <person name="Lanahan A.A."/>
            <person name="Wenthold R.J."/>
            <person name="Worley P.F."/>
        </authorList>
    </citation>
    <scope>NUCLEOTIDE SEQUENCE [MRNA] (ISOFORMS 1 AND 2)</scope>
    <source>
        <tissue>Frontal cortex</tissue>
    </source>
</reference>
<reference key="2">
    <citation type="journal article" date="2000" name="J. Mol. Biol.">
        <title>Molecular characterisation of two structurally distinct groups of human homers, generated by extensive alternative splicing.</title>
        <authorList>
            <person name="Soloviev M."/>
            <person name="Ciruela F."/>
            <person name="Chan W.-Y."/>
            <person name="McIlhinney R.A.J."/>
        </authorList>
    </citation>
    <scope>NUCLEOTIDE SEQUENCE [MRNA] (ISOFORMS 1 AND 2)</scope>
    <scope>NUCLEOTIDE SEQUENCE [MRNA] OF 1-182 (ISOFORMS 1/2)</scope>
</reference>
<reference key="3">
    <citation type="submission" date="1998-07" db="EMBL/GenBank/DDBJ databases">
        <title>Mammalian neuralized interacts with a novel protein which has a EVH1-like domain.</title>
        <authorList>
            <person name="Yoshida M."/>
            <person name="Ueno M."/>
            <person name="Nakamura H."/>
            <person name="Saya H."/>
        </authorList>
    </citation>
    <scope>NUCLEOTIDE SEQUENCE [MRNA] (ISOFORM 2)</scope>
    <source>
        <tissue>Brain</tissue>
    </source>
</reference>
<reference key="4">
    <citation type="journal article" date="2006" name="Nature">
        <title>Analysis of the DNA sequence and duplication history of human chromosome 15.</title>
        <authorList>
            <person name="Zody M.C."/>
            <person name="Garber M."/>
            <person name="Sharpe T."/>
            <person name="Young S.K."/>
            <person name="Rowen L."/>
            <person name="O'Neill K."/>
            <person name="Whittaker C.A."/>
            <person name="Kamal M."/>
            <person name="Chang J.L."/>
            <person name="Cuomo C.A."/>
            <person name="Dewar K."/>
            <person name="FitzGerald M.G."/>
            <person name="Kodira C.D."/>
            <person name="Madan A."/>
            <person name="Qin S."/>
            <person name="Yang X."/>
            <person name="Abbasi N."/>
            <person name="Abouelleil A."/>
            <person name="Arachchi H.M."/>
            <person name="Baradarani L."/>
            <person name="Birditt B."/>
            <person name="Bloom S."/>
            <person name="Bloom T."/>
            <person name="Borowsky M.L."/>
            <person name="Burke J."/>
            <person name="Butler J."/>
            <person name="Cook A."/>
            <person name="DeArellano K."/>
            <person name="DeCaprio D."/>
            <person name="Dorris L. III"/>
            <person name="Dors M."/>
            <person name="Eichler E.E."/>
            <person name="Engels R."/>
            <person name="Fahey J."/>
            <person name="Fleetwood P."/>
            <person name="Friedman C."/>
            <person name="Gearin G."/>
            <person name="Hall J.L."/>
            <person name="Hensley G."/>
            <person name="Johnson E."/>
            <person name="Jones C."/>
            <person name="Kamat A."/>
            <person name="Kaur A."/>
            <person name="Locke D.P."/>
            <person name="Madan A."/>
            <person name="Munson G."/>
            <person name="Jaffe D.B."/>
            <person name="Lui A."/>
            <person name="Macdonald P."/>
            <person name="Mauceli E."/>
            <person name="Naylor J.W."/>
            <person name="Nesbitt R."/>
            <person name="Nicol R."/>
            <person name="O'Leary S.B."/>
            <person name="Ratcliffe A."/>
            <person name="Rounsley S."/>
            <person name="She X."/>
            <person name="Sneddon K.M.B."/>
            <person name="Stewart S."/>
            <person name="Sougnez C."/>
            <person name="Stone S.M."/>
            <person name="Topham K."/>
            <person name="Vincent D."/>
            <person name="Wang S."/>
            <person name="Zimmer A.R."/>
            <person name="Birren B.W."/>
            <person name="Hood L."/>
            <person name="Lander E.S."/>
            <person name="Nusbaum C."/>
        </authorList>
    </citation>
    <scope>NUCLEOTIDE SEQUENCE [LARGE SCALE GENOMIC DNA]</scope>
</reference>
<reference key="5">
    <citation type="journal article" date="2004" name="Genome Res.">
        <title>The status, quality, and expansion of the NIH full-length cDNA project: the Mammalian Gene Collection (MGC).</title>
        <authorList>
            <consortium name="The MGC Project Team"/>
        </authorList>
    </citation>
    <scope>NUCLEOTIDE SEQUENCE [LARGE SCALE MRNA] (ISOFORM 2)</scope>
    <source>
        <tissue>Lung</tissue>
    </source>
</reference>
<reference key="6">
    <citation type="journal article" date="1998" name="Neuron">
        <title>Homer binds a novel proline-rich motif and links group 1 metabotropic glutamate receptors with IP3 receptors.</title>
        <authorList>
            <person name="Tu J.C."/>
            <person name="Xiao B."/>
            <person name="Yuan J.P."/>
            <person name="Lanahan A.A."/>
            <person name="Leoffert K."/>
            <person name="Li M."/>
            <person name="Linden D.J."/>
            <person name="Worley P.F."/>
        </authorList>
    </citation>
    <scope>FUNCTION</scope>
</reference>
<reference key="7">
    <citation type="journal article" date="2008" name="Science">
        <title>NFAT binding and regulation of T cell activation by the cytoplasmic scaffolding Homer proteins.</title>
        <authorList>
            <person name="Huang G.N."/>
            <person name="Huso D.L."/>
            <person name="Bouyain S."/>
            <person name="Tu J."/>
            <person name="McCorkell K.A."/>
            <person name="May M.J."/>
            <person name="Zhu Y."/>
            <person name="Lutz M."/>
            <person name="Collins S."/>
            <person name="Dehoff M."/>
            <person name="Kang S."/>
            <person name="Whartenby K."/>
            <person name="Powell J."/>
            <person name="Leahy D."/>
            <person name="Worley P.F."/>
        </authorList>
    </citation>
    <scope>FUNCTION</scope>
    <scope>INTERACTION WITH NFATC1; NFATC2 AND NFATC4</scope>
</reference>
<reference key="8">
    <citation type="journal article" date="2015" name="PLoS Genet.">
        <title>HOMER2, a stereociliary scaffolding protein, is essential for normal hearing in humans and mice.</title>
        <authorList>
            <person name="Azaiez H."/>
            <person name="Decker A.R."/>
            <person name="Booth K.T."/>
            <person name="Simpson A.C."/>
            <person name="Shearer A.E."/>
            <person name="Huygen P.L."/>
            <person name="Bu F."/>
            <person name="Hildebrand M.S."/>
            <person name="Ranum P.T."/>
            <person name="Shibata S.B."/>
            <person name="Turner A."/>
            <person name="Zhang Y."/>
            <person name="Kimberling W.J."/>
            <person name="Cornell R.A."/>
            <person name="Smith R.J."/>
        </authorList>
    </citation>
    <scope>FUNCTION</scope>
    <scope>INVOLVEMENT IN DFNA68</scope>
    <scope>SUBCELLULAR LOCATION</scope>
    <scope>VARIANT DFNA68 PRO-196</scope>
</reference>
<proteinExistence type="evidence at protein level"/>
<organism>
    <name type="scientific">Homo sapiens</name>
    <name type="common">Human</name>
    <dbReference type="NCBI Taxonomy" id="9606"/>
    <lineage>
        <taxon>Eukaryota</taxon>
        <taxon>Metazoa</taxon>
        <taxon>Chordata</taxon>
        <taxon>Craniata</taxon>
        <taxon>Vertebrata</taxon>
        <taxon>Euteleostomi</taxon>
        <taxon>Mammalia</taxon>
        <taxon>Eutheria</taxon>
        <taxon>Euarchontoglires</taxon>
        <taxon>Primates</taxon>
        <taxon>Haplorrhini</taxon>
        <taxon>Catarrhini</taxon>
        <taxon>Hominidae</taxon>
        <taxon>Homo</taxon>
    </lineage>
</organism>
<protein>
    <recommendedName>
        <fullName evidence="13">Homer protein homolog 2</fullName>
        <shortName>Homer-2</shortName>
    </recommendedName>
    <alternativeName>
        <fullName evidence="2">Cupidin</fullName>
    </alternativeName>
</protein>
<evidence type="ECO:0000250" key="1">
    <source>
        <dbReference type="UniProtKB" id="O88801"/>
    </source>
</evidence>
<evidence type="ECO:0000250" key="2">
    <source>
        <dbReference type="UniProtKB" id="Q9QWW1"/>
    </source>
</evidence>
<evidence type="ECO:0000255" key="3"/>
<evidence type="ECO:0000255" key="4">
    <source>
        <dbReference type="PROSITE-ProRule" id="PRU00410"/>
    </source>
</evidence>
<evidence type="ECO:0000256" key="5">
    <source>
        <dbReference type="SAM" id="MobiDB-lite"/>
    </source>
</evidence>
<evidence type="ECO:0000269" key="6">
    <source>
    </source>
</evidence>
<evidence type="ECO:0000269" key="7">
    <source>
    </source>
</evidence>
<evidence type="ECO:0000269" key="8">
    <source>
    </source>
</evidence>
<evidence type="ECO:0000303" key="9">
    <source>
    </source>
</evidence>
<evidence type="ECO:0000303" key="10">
    <source>
    </source>
</evidence>
<evidence type="ECO:0000303" key="11">
    <source>
    </source>
</evidence>
<evidence type="ECO:0000303" key="12">
    <source ref="3"/>
</evidence>
<evidence type="ECO:0000305" key="13"/>
<evidence type="ECO:0000312" key="14">
    <source>
        <dbReference type="HGNC" id="HGNC:17513"/>
    </source>
</evidence>
<dbReference type="EMBL" id="AF093263">
    <property type="protein sequence ID" value="AAC71027.1"/>
    <property type="molecule type" value="mRNA"/>
</dbReference>
<dbReference type="EMBL" id="AF093264">
    <property type="protein sequence ID" value="AAC71028.1"/>
    <property type="molecule type" value="mRNA"/>
</dbReference>
<dbReference type="EMBL" id="Y19025">
    <property type="protein sequence ID" value="CAB75537.1"/>
    <property type="molecule type" value="mRNA"/>
</dbReference>
<dbReference type="EMBL" id="Y19026">
    <property type="protein sequence ID" value="CAB75538.1"/>
    <property type="molecule type" value="mRNA"/>
</dbReference>
<dbReference type="EMBL" id="Y19027">
    <property type="protein sequence ID" value="CAB75539.1"/>
    <property type="status" value="ALT_SEQ"/>
    <property type="molecule type" value="mRNA"/>
</dbReference>
<dbReference type="EMBL" id="Y19028">
    <property type="protein sequence ID" value="CAB75540.1"/>
    <property type="status" value="ALT_SEQ"/>
    <property type="molecule type" value="mRNA"/>
</dbReference>
<dbReference type="EMBL" id="AF081530">
    <property type="protein sequence ID" value="AAD13748.1"/>
    <property type="molecule type" value="mRNA"/>
</dbReference>
<dbReference type="EMBL" id="AC022558">
    <property type="status" value="NOT_ANNOTATED_CDS"/>
    <property type="molecule type" value="Genomic_DNA"/>
</dbReference>
<dbReference type="EMBL" id="AC044907">
    <property type="status" value="NOT_ANNOTATED_CDS"/>
    <property type="molecule type" value="Genomic_DNA"/>
</dbReference>
<dbReference type="EMBL" id="BC012109">
    <property type="protein sequence ID" value="AAH12109.1"/>
    <property type="molecule type" value="mRNA"/>
</dbReference>
<dbReference type="CCDS" id="CCDS45334.1">
    <molecule id="Q9NSB8-1"/>
</dbReference>
<dbReference type="CCDS" id="CCDS45336.1">
    <molecule id="Q9NSB8-2"/>
</dbReference>
<dbReference type="RefSeq" id="NP_004830.2">
    <molecule id="Q9NSB8-2"/>
    <property type="nucleotide sequence ID" value="NM_004839.3"/>
</dbReference>
<dbReference type="RefSeq" id="NP_955362.1">
    <molecule id="Q9NSB8-1"/>
    <property type="nucleotide sequence ID" value="NM_199330.3"/>
</dbReference>
<dbReference type="RefSeq" id="XP_047289311.1">
    <molecule id="Q9NSB8-1"/>
    <property type="nucleotide sequence ID" value="XM_047433355.1"/>
</dbReference>
<dbReference type="RefSeq" id="XP_047289314.1">
    <molecule id="Q9NSB8-2"/>
    <property type="nucleotide sequence ID" value="XM_047433358.1"/>
</dbReference>
<dbReference type="RefSeq" id="XP_047289315.1">
    <molecule id="Q9NSB8-2"/>
    <property type="nucleotide sequence ID" value="XM_047433359.1"/>
</dbReference>
<dbReference type="RefSeq" id="XP_054235205.1">
    <molecule id="Q9NSB8-1"/>
    <property type="nucleotide sequence ID" value="XM_054379230.1"/>
</dbReference>
<dbReference type="RefSeq" id="XP_054235209.1">
    <molecule id="Q9NSB8-2"/>
    <property type="nucleotide sequence ID" value="XM_054379234.1"/>
</dbReference>
<dbReference type="RefSeq" id="XP_054235210.1">
    <molecule id="Q9NSB8-2"/>
    <property type="nucleotide sequence ID" value="XM_054379235.1"/>
</dbReference>
<dbReference type="SMR" id="Q9NSB8"/>
<dbReference type="BioGRID" id="114844">
    <property type="interactions" value="25"/>
</dbReference>
<dbReference type="FunCoup" id="Q9NSB8">
    <property type="interactions" value="485"/>
</dbReference>
<dbReference type="IntAct" id="Q9NSB8">
    <property type="interactions" value="21"/>
</dbReference>
<dbReference type="MINT" id="Q9NSB8"/>
<dbReference type="STRING" id="9606.ENSP00000305632"/>
<dbReference type="GlyGen" id="Q9NSB8">
    <property type="glycosylation" value="1 site, 1 O-linked glycan (1 site)"/>
</dbReference>
<dbReference type="iPTMnet" id="Q9NSB8"/>
<dbReference type="PhosphoSitePlus" id="Q9NSB8"/>
<dbReference type="BioMuta" id="HOMER2"/>
<dbReference type="DMDM" id="38605067"/>
<dbReference type="jPOST" id="Q9NSB8"/>
<dbReference type="MassIVE" id="Q9NSB8"/>
<dbReference type="PaxDb" id="9606-ENSP00000305632"/>
<dbReference type="PeptideAtlas" id="Q9NSB8"/>
<dbReference type="ProteomicsDB" id="82525">
    <molecule id="Q9NSB8-1"/>
</dbReference>
<dbReference type="ProteomicsDB" id="82526">
    <molecule id="Q9NSB8-2"/>
</dbReference>
<dbReference type="Pumba" id="Q9NSB8"/>
<dbReference type="Antibodypedia" id="28153">
    <property type="antibodies" value="262 antibodies from 23 providers"/>
</dbReference>
<dbReference type="DNASU" id="9455"/>
<dbReference type="Ensembl" id="ENST00000304231.12">
    <molecule id="Q9NSB8-1"/>
    <property type="protein sequence ID" value="ENSP00000305632.8"/>
    <property type="gene ID" value="ENSG00000103942.13"/>
</dbReference>
<dbReference type="Ensembl" id="ENST00000450735.7">
    <molecule id="Q9NSB8-2"/>
    <property type="protein sequence ID" value="ENSP00000407634.2"/>
    <property type="gene ID" value="ENSG00000103942.13"/>
</dbReference>
<dbReference type="GeneID" id="9455"/>
<dbReference type="KEGG" id="hsa:9455"/>
<dbReference type="MANE-Select" id="ENST00000450735.7">
    <molecule id="Q9NSB8-2"/>
    <property type="protein sequence ID" value="ENSP00000407634.2"/>
    <property type="RefSeq nucleotide sequence ID" value="NM_004839.4"/>
    <property type="RefSeq protein sequence ID" value="NP_004830.2"/>
</dbReference>
<dbReference type="UCSC" id="uc002bjg.4">
    <molecule id="Q9NSB8-1"/>
    <property type="organism name" value="human"/>
</dbReference>
<dbReference type="AGR" id="HGNC:17513"/>
<dbReference type="CTD" id="9455"/>
<dbReference type="DisGeNET" id="9455"/>
<dbReference type="GeneCards" id="HOMER2"/>
<dbReference type="HGNC" id="HGNC:17513">
    <property type="gene designation" value="HOMER2"/>
</dbReference>
<dbReference type="HPA" id="ENSG00000103942">
    <property type="expression patterns" value="Tissue enhanced (pancreas)"/>
</dbReference>
<dbReference type="MalaCards" id="HOMER2"/>
<dbReference type="MIM" id="604799">
    <property type="type" value="gene"/>
</dbReference>
<dbReference type="MIM" id="616707">
    <property type="type" value="phenotype"/>
</dbReference>
<dbReference type="neXtProt" id="NX_Q9NSB8"/>
<dbReference type="OpenTargets" id="ENSG00000103942"/>
<dbReference type="Orphanet" id="90635">
    <property type="disease" value="Rare autosomal dominant non-syndromic sensorineural deafness type DFNA"/>
</dbReference>
<dbReference type="PharmGKB" id="PA134870500"/>
<dbReference type="VEuPathDB" id="HostDB:ENSG00000103942"/>
<dbReference type="eggNOG" id="ENOG502QR3K">
    <property type="taxonomic scope" value="Eukaryota"/>
</dbReference>
<dbReference type="GeneTree" id="ENSGT00940000157324"/>
<dbReference type="HOGENOM" id="CLU_033940_0_0_1"/>
<dbReference type="InParanoid" id="Q9NSB8"/>
<dbReference type="OMA" id="WEIELTT"/>
<dbReference type="OrthoDB" id="9983798at2759"/>
<dbReference type="PAN-GO" id="Q9NSB8">
    <property type="GO annotations" value="7 GO annotations based on evolutionary models"/>
</dbReference>
<dbReference type="PhylomeDB" id="Q9NSB8"/>
<dbReference type="TreeFam" id="TF325627"/>
<dbReference type="PathwayCommons" id="Q9NSB8"/>
<dbReference type="Reactome" id="R-HSA-6794361">
    <property type="pathway name" value="Neurexins and neuroligins"/>
</dbReference>
<dbReference type="SignaLink" id="Q9NSB8"/>
<dbReference type="SIGNOR" id="Q9NSB8"/>
<dbReference type="BioGRID-ORCS" id="9455">
    <property type="hits" value="12 hits in 1150 CRISPR screens"/>
</dbReference>
<dbReference type="CD-CODE" id="FB4E32DD">
    <property type="entry name" value="Presynaptic clusters and postsynaptic densities"/>
</dbReference>
<dbReference type="ChiTaRS" id="HOMER2">
    <property type="organism name" value="human"/>
</dbReference>
<dbReference type="GeneWiki" id="HOMER2"/>
<dbReference type="GenomeRNAi" id="9455"/>
<dbReference type="Pharos" id="Q9NSB8">
    <property type="development level" value="Tbio"/>
</dbReference>
<dbReference type="PRO" id="PR:Q9NSB8"/>
<dbReference type="Proteomes" id="UP000005640">
    <property type="component" value="Chromosome 15"/>
</dbReference>
<dbReference type="RNAct" id="Q9NSB8">
    <property type="molecule type" value="protein"/>
</dbReference>
<dbReference type="Bgee" id="ENSG00000103942">
    <property type="expression patterns" value="Expressed in body of pancreas and 161 other cell types or tissues"/>
</dbReference>
<dbReference type="ExpressionAtlas" id="Q9NSB8">
    <property type="expression patterns" value="baseline and differential"/>
</dbReference>
<dbReference type="GO" id="GO:0045177">
    <property type="term" value="C:apical part of cell"/>
    <property type="evidence" value="ECO:0007669"/>
    <property type="project" value="Ensembl"/>
</dbReference>
<dbReference type="GO" id="GO:0005737">
    <property type="term" value="C:cytoplasm"/>
    <property type="evidence" value="ECO:0000314"/>
    <property type="project" value="UniProtKB"/>
</dbReference>
<dbReference type="GO" id="GO:0005829">
    <property type="term" value="C:cytosol"/>
    <property type="evidence" value="ECO:0000314"/>
    <property type="project" value="HPA"/>
</dbReference>
<dbReference type="GO" id="GO:0030425">
    <property type="term" value="C:dendrite"/>
    <property type="evidence" value="ECO:0000318"/>
    <property type="project" value="GO_Central"/>
</dbReference>
<dbReference type="GO" id="GO:0098978">
    <property type="term" value="C:glutamatergic synapse"/>
    <property type="evidence" value="ECO:0007669"/>
    <property type="project" value="Ensembl"/>
</dbReference>
<dbReference type="GO" id="GO:0043229">
    <property type="term" value="C:intracellular organelle"/>
    <property type="evidence" value="ECO:0000250"/>
    <property type="project" value="UniProtKB"/>
</dbReference>
<dbReference type="GO" id="GO:0005886">
    <property type="term" value="C:plasma membrane"/>
    <property type="evidence" value="ECO:0000250"/>
    <property type="project" value="UniProtKB"/>
</dbReference>
<dbReference type="GO" id="GO:0014069">
    <property type="term" value="C:postsynaptic density"/>
    <property type="evidence" value="ECO:0000318"/>
    <property type="project" value="GO_Central"/>
</dbReference>
<dbReference type="GO" id="GO:0032426">
    <property type="term" value="C:stereocilium tip"/>
    <property type="evidence" value="ECO:0000250"/>
    <property type="project" value="UniProtKB"/>
</dbReference>
<dbReference type="GO" id="GO:0003779">
    <property type="term" value="F:actin binding"/>
    <property type="evidence" value="ECO:0007669"/>
    <property type="project" value="Ensembl"/>
</dbReference>
<dbReference type="GO" id="GO:0035256">
    <property type="term" value="F:G protein-coupled glutamate receptor binding"/>
    <property type="evidence" value="ECO:0000318"/>
    <property type="project" value="GO_Central"/>
</dbReference>
<dbReference type="GO" id="GO:0030160">
    <property type="term" value="F:synaptic receptor adaptor activity"/>
    <property type="evidence" value="ECO:0007669"/>
    <property type="project" value="Ensembl"/>
</dbReference>
<dbReference type="GO" id="GO:0048148">
    <property type="term" value="P:behavioral response to cocaine"/>
    <property type="evidence" value="ECO:0007669"/>
    <property type="project" value="Ensembl"/>
</dbReference>
<dbReference type="GO" id="GO:0019722">
    <property type="term" value="P:calcium-mediated signaling"/>
    <property type="evidence" value="ECO:0007669"/>
    <property type="project" value="Ensembl"/>
</dbReference>
<dbReference type="GO" id="GO:0007216">
    <property type="term" value="P:G protein-coupled glutamate receptor signaling pathway"/>
    <property type="evidence" value="ECO:0000318"/>
    <property type="project" value="GO_Central"/>
</dbReference>
<dbReference type="GO" id="GO:0070885">
    <property type="term" value="P:negative regulation of calcineurin-NFAT signaling cascade"/>
    <property type="evidence" value="ECO:0000315"/>
    <property type="project" value="UniProtKB"/>
</dbReference>
<dbReference type="GO" id="GO:0032703">
    <property type="term" value="P:negative regulation of interleukin-2 production"/>
    <property type="evidence" value="ECO:0000315"/>
    <property type="project" value="UniProtKB"/>
</dbReference>
<dbReference type="GO" id="GO:0008277">
    <property type="term" value="P:regulation of G protein-coupled receptor signaling pathway"/>
    <property type="evidence" value="ECO:0007669"/>
    <property type="project" value="Ensembl"/>
</dbReference>
<dbReference type="GO" id="GO:2001256">
    <property type="term" value="P:regulation of store-operated calcium entry"/>
    <property type="evidence" value="ECO:0000318"/>
    <property type="project" value="GO_Central"/>
</dbReference>
<dbReference type="GO" id="GO:0007605">
    <property type="term" value="P:sensory perception of sound"/>
    <property type="evidence" value="ECO:0000315"/>
    <property type="project" value="UniProtKB"/>
</dbReference>
<dbReference type="CDD" id="cd01206">
    <property type="entry name" value="EVH1_Homer_Vesl"/>
    <property type="match status" value="1"/>
</dbReference>
<dbReference type="FunFam" id="2.30.29.30:FF:000014">
    <property type="entry name" value="Homer homolog 1 (Drosophila)"/>
    <property type="match status" value="1"/>
</dbReference>
<dbReference type="FunFam" id="1.20.5.1700:FF:000004">
    <property type="entry name" value="Homer homolog 2 (Drosophila)"/>
    <property type="match status" value="1"/>
</dbReference>
<dbReference type="Gene3D" id="1.20.5.1700">
    <property type="match status" value="1"/>
</dbReference>
<dbReference type="Gene3D" id="2.30.29.30">
    <property type="entry name" value="Pleckstrin-homology domain (PH domain)/Phosphotyrosine-binding domain (PTB)"/>
    <property type="match status" value="1"/>
</dbReference>
<dbReference type="InterPro" id="IPR045027">
    <property type="entry name" value="Homer"/>
</dbReference>
<dbReference type="InterPro" id="IPR044100">
    <property type="entry name" value="Homer_EVH1"/>
</dbReference>
<dbReference type="InterPro" id="IPR011993">
    <property type="entry name" value="PH-like_dom_sf"/>
</dbReference>
<dbReference type="InterPro" id="IPR000697">
    <property type="entry name" value="WH1/EVH1_dom"/>
</dbReference>
<dbReference type="PANTHER" id="PTHR10918">
    <property type="entry name" value="HOMER"/>
    <property type="match status" value="1"/>
</dbReference>
<dbReference type="Pfam" id="PF00568">
    <property type="entry name" value="WH1"/>
    <property type="match status" value="1"/>
</dbReference>
<dbReference type="SMART" id="SM00461">
    <property type="entry name" value="WH1"/>
    <property type="match status" value="1"/>
</dbReference>
<dbReference type="SUPFAM" id="SSF50729">
    <property type="entry name" value="PH domain-like"/>
    <property type="match status" value="1"/>
</dbReference>
<dbReference type="PROSITE" id="PS50229">
    <property type="entry name" value="WH1"/>
    <property type="match status" value="1"/>
</dbReference>
<name>HOME2_HUMAN</name>
<feature type="chain" id="PRO_0000191008" description="Homer protein homolog 2">
    <location>
        <begin position="1"/>
        <end position="354"/>
    </location>
</feature>
<feature type="domain" description="WH1" evidence="4">
    <location>
        <begin position="1"/>
        <end position="110"/>
    </location>
</feature>
<feature type="region of interest" description="Disordered" evidence="5">
    <location>
        <begin position="112"/>
        <end position="166"/>
    </location>
</feature>
<feature type="coiled-coil region" evidence="3">
    <location>
        <begin position="92"/>
        <end position="122"/>
    </location>
</feature>
<feature type="coiled-coil region" evidence="3">
    <location>
        <begin position="160"/>
        <end position="329"/>
    </location>
</feature>
<feature type="compositionally biased region" description="Basic and acidic residues" evidence="5">
    <location>
        <begin position="112"/>
        <end position="122"/>
    </location>
</feature>
<feature type="compositionally biased region" description="Polar residues" evidence="5">
    <location>
        <begin position="123"/>
        <end position="146"/>
    </location>
</feature>
<feature type="splice variant" id="VSP_041731" description="In isoform 2." evidence="9 10 11 12">
    <location>
        <begin position="130"/>
        <end position="140"/>
    </location>
</feature>
<feature type="sequence variant" id="VAR_075751" description="In DFNA68; dbSNP:rs864309524." evidence="7">
    <original>R</original>
    <variation>P</variation>
    <location>
        <position position="196"/>
    </location>
</feature>
<feature type="sequence variant" id="VAR_053366" description="In dbSNP:rs7175005.">
    <original>R</original>
    <variation>H</variation>
    <location>
        <position position="219"/>
    </location>
</feature>
<feature type="sequence variant" id="VAR_053367" description="In dbSNP:rs17158223.">
    <original>I</original>
    <variation>S</variation>
    <location>
        <position position="239"/>
    </location>
</feature>
<feature type="sequence conflict" description="In Ref. 1; AAC71027/AAC71028." evidence="13" ref="1">
    <original>D</original>
    <variation>E</variation>
    <location>
        <position position="149"/>
    </location>
</feature>
<feature type="sequence conflict" description="In Ref. 1; AAC71027/AAC71028." evidence="13" ref="1">
    <original>H</original>
    <variation>Q</variation>
    <location>
        <position position="161"/>
    </location>
</feature>
<comment type="function">
    <text evidence="6 7 8">Postsynaptic density scaffolding protein. Binds and cross-links cytoplasmic regions of GRM1, GRM5, ITPR1, DNM3, RYR1, RYR2, SHANK1 and SHANK3. By physically linking GRM1 and GRM5 with ER-associated ITPR1 receptors, it aids the coupling of surface receptors to intracellular calcium release. May also couple GRM1 to PI3 kinase through its interaction with AGAP2. Isoforms can be differently regulated and may play an important role in maintaining the plasticity at glutamatergic synapses (PubMed:9808459). Required for normal hearing (PubMed:25816005). Negatively regulates T cell activation by inhibiting the calcineurin-NFAT pathway. Acts by competing with calcineurin/PPP3CA for NFAT protein binding, hence preventing NFAT activation by PPP3CA (PubMed:18218901).</text>
</comment>
<comment type="subunit">
    <text evidence="1 6">Forms coiled-coil structures that mediate homo- and heteromultimerization. Interacts with NFATC2; interaction is reduced by AKT activation (PubMed:18218901). Interacts with NFATC1 and NFATC4 (PubMed:18218901). Interacts with DAGLA (via PPXXF motif); this interaction is required for the cell membrane localization of DAGLA (By similarity).</text>
</comment>
<comment type="interaction">
    <interactant intactId="EBI-2126733">
        <id>Q9NSB8</id>
    </interactant>
    <interactant intactId="EBI-741037">
        <id>Q9BRK4</id>
        <label>LZTS2</label>
    </interactant>
    <organismsDiffer>false</organismsDiffer>
    <experiments>3</experiments>
</comment>
<comment type="interaction">
    <interactant intactId="EBI-2126733">
        <id>Q9NSB8</id>
    </interactant>
    <interactant intactId="EBI-2130266">
        <id>Q9H4P4</id>
        <label>RNF41</label>
    </interactant>
    <organismsDiffer>false</organismsDiffer>
    <experiments>3</experiments>
</comment>
<comment type="interaction">
    <interactant intactId="EBI-12017090">
        <id>Q9NSB8-2</id>
    </interactant>
    <interactant intactId="EBI-742038">
        <id>Q9P2A4</id>
        <label>ABI3</label>
    </interactant>
    <organismsDiffer>false</organismsDiffer>
    <experiments>3</experiments>
</comment>
<comment type="interaction">
    <interactant intactId="EBI-12017090">
        <id>Q9NSB8-2</id>
    </interactant>
    <interactant intactId="EBI-12218525">
        <id>Q8WX93-2</id>
        <label>PALLD</label>
    </interactant>
    <organismsDiffer>false</organismsDiffer>
    <experiments>3</experiments>
</comment>
<comment type="subcellular location">
    <subcellularLocation>
        <location evidence="7">Cytoplasm</location>
    </subcellularLocation>
    <subcellularLocation>
        <location evidence="1">Cell membrane</location>
    </subcellularLocation>
    <subcellularLocation>
        <location>Postsynaptic density</location>
    </subcellularLocation>
    <subcellularLocation>
        <location>Synapse</location>
    </subcellularLocation>
    <subcellularLocation>
        <location evidence="2">Cell projection</location>
        <location evidence="2">Stereocilium</location>
    </subcellularLocation>
    <text>Postsynaptic density of neuronal cells. The stabilization and clustering of the metabotropic glutamate receptors appears to be mediated by isoform 1 and isoform 2 at the cell surface.</text>
</comment>
<comment type="alternative products">
    <event type="alternative splicing"/>
    <isoform>
        <id>Q9NSB8-1</id>
        <name>1</name>
        <name>2b</name>
        <sequence type="displayed"/>
    </isoform>
    <isoform>
        <id>Q9NSB8-2</id>
        <name>2</name>
        <name>2a</name>
        <sequence type="described" ref="VSP_041731"/>
    </isoform>
</comment>
<comment type="domain">
    <text>The WH1 domain interacts with the PPXXF motif in GRM1, GRM5, RYR1, RYR2, ITPR1, SHANK 1 and SHANK3.</text>
</comment>
<comment type="disease" evidence="7">
    <disease id="DI-04600">
        <name>Deafness, autosomal dominant, 68</name>
        <acronym>DFNA68</acronym>
        <description>A form of non-syndromic sensorineural hearing loss with postlingual onset. Sensorineural deafness results from damage to the neural receptors of the inner ear, the nerve pathways to the brain, or the area of the brain that receives sound information.</description>
        <dbReference type="MIM" id="616707"/>
    </disease>
    <text>The disease is caused by variants affecting the gene represented in this entry.</text>
</comment>
<comment type="similarity">
    <text evidence="13">Belongs to the Homer family.</text>
</comment>
<comment type="sequence caution" evidence="13">
    <conflict type="miscellaneous discrepancy">
        <sequence resource="EMBL-CDS" id="CAB75539"/>
    </conflict>
    <text>Aberrant splicing.</text>
</comment>
<comment type="sequence caution" evidence="13">
    <conflict type="miscellaneous discrepancy">
        <sequence resource="EMBL-CDS" id="CAB75540"/>
    </conflict>
    <text>Aberrant splicing.</text>
</comment>
<gene>
    <name evidence="14" type="primary">HOMER2</name>
</gene>
<accession>Q9NSB8</accession>
<accession>O95269</accession>
<accession>O95349</accession>
<accession>Q9NSB6</accession>
<accession>Q9NSB7</accession>
<accession>Q9UNT7</accession>
<keyword id="KW-0025">Alternative splicing</keyword>
<keyword id="KW-1003">Cell membrane</keyword>
<keyword id="KW-0966">Cell projection</keyword>
<keyword id="KW-0175">Coiled coil</keyword>
<keyword id="KW-0963">Cytoplasm</keyword>
<keyword id="KW-0209">Deafness</keyword>
<keyword id="KW-0225">Disease variant</keyword>
<keyword id="KW-1009">Hearing</keyword>
<keyword id="KW-0472">Membrane</keyword>
<keyword id="KW-1010">Non-syndromic deafness</keyword>
<keyword id="KW-1267">Proteomics identification</keyword>
<keyword id="KW-1185">Reference proteome</keyword>
<keyword id="KW-0770">Synapse</keyword>